<evidence type="ECO:0000250" key="1"/>
<evidence type="ECO:0000255" key="2">
    <source>
        <dbReference type="PROSITE-ProRule" id="PRU01005"/>
    </source>
</evidence>
<evidence type="ECO:0000305" key="3"/>
<name>CRVP_ERYPO</name>
<feature type="signal peptide" evidence="1">
    <location>
        <begin position="1"/>
        <end position="18"/>
    </location>
</feature>
<feature type="chain" id="PRO_0000380646" description="Cysteine-rich venom protein LIO1">
    <location>
        <begin position="19"/>
        <end position="233" status="greater than"/>
    </location>
</feature>
<feature type="domain" description="SCP">
    <location>
        <begin position="37"/>
        <end position="165"/>
    </location>
</feature>
<feature type="domain" description="ShKT" evidence="2">
    <location>
        <begin position="201"/>
        <end position="233"/>
    </location>
</feature>
<feature type="disulfide bond" evidence="2">
    <location>
        <begin position="74"/>
        <end position="152"/>
    </location>
</feature>
<feature type="disulfide bond" evidence="2">
    <location>
        <begin position="91"/>
        <end position="166"/>
    </location>
</feature>
<feature type="disulfide bond" evidence="2">
    <location>
        <begin position="147"/>
        <end position="163"/>
    </location>
</feature>
<feature type="disulfide bond" evidence="2">
    <location>
        <begin position="185"/>
        <end position="192"/>
    </location>
</feature>
<feature type="disulfide bond" evidence="2">
    <location>
        <begin position="188"/>
        <end position="197"/>
    </location>
</feature>
<feature type="disulfide bond" evidence="2">
    <location>
        <begin position="210"/>
        <end position="228"/>
    </location>
</feature>
<feature type="disulfide bond" evidence="2">
    <location>
        <begin position="219"/>
        <end position="232"/>
    </location>
</feature>
<feature type="non-terminal residue">
    <location>
        <position position="233"/>
    </location>
</feature>
<organism>
    <name type="scientific">Erythrolamprus poecilogyrus</name>
    <name type="common">Water snake</name>
    <name type="synonym">Liophis poecilogyrus</name>
    <dbReference type="NCBI Taxonomy" id="338838"/>
    <lineage>
        <taxon>Eukaryota</taxon>
        <taxon>Metazoa</taxon>
        <taxon>Chordata</taxon>
        <taxon>Craniata</taxon>
        <taxon>Vertebrata</taxon>
        <taxon>Euteleostomi</taxon>
        <taxon>Lepidosauria</taxon>
        <taxon>Squamata</taxon>
        <taxon>Bifurcata</taxon>
        <taxon>Unidentata</taxon>
        <taxon>Episquamata</taxon>
        <taxon>Toxicofera</taxon>
        <taxon>Serpentes</taxon>
        <taxon>Colubroidea</taxon>
        <taxon>Dipsadidae</taxon>
        <taxon>Erythrolamprus</taxon>
    </lineage>
</organism>
<reference key="1">
    <citation type="journal article" date="2006" name="Nature">
        <title>Early evolution of the venom system in lizards and snakes.</title>
        <authorList>
            <person name="Fry B.G."/>
            <person name="Vidal N."/>
            <person name="Norman J.A."/>
            <person name="Vonk F.J."/>
            <person name="Scheib H."/>
            <person name="Ramjan S.F.R."/>
            <person name="Kuruppu S."/>
            <person name="Fung K."/>
            <person name="Blair Hedges S."/>
            <person name="Richardson M.K."/>
            <person name="Hodgson W.C."/>
            <person name="Ignjatovic V."/>
            <person name="Summerhayes R."/>
            <person name="Kochva E."/>
        </authorList>
    </citation>
    <scope>NUCLEOTIDE SEQUENCE [LARGE SCALE MRNA]</scope>
    <source>
        <tissue>Venom gland</tissue>
    </source>
</reference>
<sequence>MIVFILLSFAAVLQQSFGRIDIDSQSTRRPEIQNLIVDTHNSYRRSVSPTATNMLKMEWYPEAAANAERWAYQCVYDHSQKYERVLDGIQCGENIYMYSEFRPWTEVMQSWYDEYRNFIFGVGAHPANALIGHYTQIVWYKSYRVGCAIANCPSYPYNYFYVCQYCPAGNFGGQTATPYNSGTTCADCPSACDNGLCTNPCTSENVFTNCNDMVKESGCQDERMKSICPASCF</sequence>
<keyword id="KW-0108">Calcium channel impairing toxin</keyword>
<keyword id="KW-1015">Disulfide bond</keyword>
<keyword id="KW-0872">Ion channel impairing toxin</keyword>
<keyword id="KW-0528">Neurotoxin</keyword>
<keyword id="KW-0964">Secreted</keyword>
<keyword id="KW-0732">Signal</keyword>
<keyword id="KW-0800">Toxin</keyword>
<accession>Q2XXQ0</accession>
<comment type="function">
    <text evidence="1">Blocks contraction of smooth muscle elicited by high potassium-induced depolarization, but does not block caffeine-stimulated contraction. May target voltage-gated calcium channels on smooth muscle (By similarity).</text>
</comment>
<comment type="subcellular location">
    <subcellularLocation>
        <location evidence="1">Secreted</location>
    </subcellularLocation>
</comment>
<comment type="tissue specificity">
    <text>Expressed by the venom gland.</text>
</comment>
<comment type="similarity">
    <text evidence="3">Belongs to the CRISP family.</text>
</comment>
<protein>
    <recommendedName>
        <fullName>Cysteine-rich venom protein LIO1</fullName>
        <shortName>CRVP</shortName>
    </recommendedName>
    <alternativeName>
        <fullName>Cysteine-rich secretory protein LIO1</fullName>
        <shortName>CRISP-LIO1</shortName>
    </alternativeName>
</protein>
<proteinExistence type="evidence at transcript level"/>
<dbReference type="EMBL" id="DQ139895">
    <property type="protein sequence ID" value="AAZ75601.1"/>
    <property type="molecule type" value="mRNA"/>
</dbReference>
<dbReference type="SMR" id="Q2XXQ0"/>
<dbReference type="GO" id="GO:0005576">
    <property type="term" value="C:extracellular region"/>
    <property type="evidence" value="ECO:0007669"/>
    <property type="project" value="UniProtKB-SubCell"/>
</dbReference>
<dbReference type="GO" id="GO:0005246">
    <property type="term" value="F:calcium channel regulator activity"/>
    <property type="evidence" value="ECO:0007669"/>
    <property type="project" value="UniProtKB-KW"/>
</dbReference>
<dbReference type="GO" id="GO:0090729">
    <property type="term" value="F:toxin activity"/>
    <property type="evidence" value="ECO:0007669"/>
    <property type="project" value="UniProtKB-KW"/>
</dbReference>
<dbReference type="CDD" id="cd05383">
    <property type="entry name" value="CAP_CRISP"/>
    <property type="match status" value="1"/>
</dbReference>
<dbReference type="FunFam" id="3.40.33.10:FF:000005">
    <property type="entry name" value="Cysteine-rich secretory protein 2"/>
    <property type="match status" value="1"/>
</dbReference>
<dbReference type="Gene3D" id="3.40.33.10">
    <property type="entry name" value="CAP"/>
    <property type="match status" value="1"/>
</dbReference>
<dbReference type="Gene3D" id="1.10.10.740">
    <property type="entry name" value="Crisp domain"/>
    <property type="match status" value="1"/>
</dbReference>
<dbReference type="InterPro" id="IPR018244">
    <property type="entry name" value="Allrgn_V5/Tpx1_CS"/>
</dbReference>
<dbReference type="InterPro" id="IPR014044">
    <property type="entry name" value="CAP_dom"/>
</dbReference>
<dbReference type="InterPro" id="IPR035940">
    <property type="entry name" value="CAP_sf"/>
</dbReference>
<dbReference type="InterPro" id="IPR042076">
    <property type="entry name" value="Crisp-like_dom"/>
</dbReference>
<dbReference type="InterPro" id="IPR001283">
    <property type="entry name" value="CRISP-related"/>
</dbReference>
<dbReference type="InterPro" id="IPR013871">
    <property type="entry name" value="Cysteine_rich_secretory"/>
</dbReference>
<dbReference type="InterPro" id="IPR034117">
    <property type="entry name" value="SCP_CRISP"/>
</dbReference>
<dbReference type="InterPro" id="IPR003582">
    <property type="entry name" value="ShKT_dom"/>
</dbReference>
<dbReference type="InterPro" id="IPR002413">
    <property type="entry name" value="V5_allergen-like"/>
</dbReference>
<dbReference type="PANTHER" id="PTHR10334">
    <property type="entry name" value="CYSTEINE-RICH SECRETORY PROTEIN-RELATED"/>
    <property type="match status" value="1"/>
</dbReference>
<dbReference type="Pfam" id="PF00188">
    <property type="entry name" value="CAP"/>
    <property type="match status" value="1"/>
</dbReference>
<dbReference type="Pfam" id="PF08562">
    <property type="entry name" value="Crisp"/>
    <property type="match status" value="1"/>
</dbReference>
<dbReference type="PRINTS" id="PR00838">
    <property type="entry name" value="V5ALLERGEN"/>
</dbReference>
<dbReference type="PRINTS" id="PR00837">
    <property type="entry name" value="V5TPXLIKE"/>
</dbReference>
<dbReference type="SMART" id="SM00198">
    <property type="entry name" value="SCP"/>
    <property type="match status" value="1"/>
</dbReference>
<dbReference type="SUPFAM" id="SSF57546">
    <property type="entry name" value="Crisp domain-like"/>
    <property type="match status" value="1"/>
</dbReference>
<dbReference type="SUPFAM" id="SSF55797">
    <property type="entry name" value="PR-1-like"/>
    <property type="match status" value="1"/>
</dbReference>
<dbReference type="PROSITE" id="PS01009">
    <property type="entry name" value="CRISP_1"/>
    <property type="match status" value="1"/>
</dbReference>
<dbReference type="PROSITE" id="PS01010">
    <property type="entry name" value="CRISP_2"/>
    <property type="match status" value="1"/>
</dbReference>
<dbReference type="PROSITE" id="PS51670">
    <property type="entry name" value="SHKT"/>
    <property type="match status" value="1"/>
</dbReference>